<proteinExistence type="inferred from homology"/>
<protein>
    <recommendedName>
        <fullName>Nicastrin</fullName>
    </recommendedName>
</protein>
<comment type="function">
    <text evidence="1">Essential subunit of the gamma-secretase complex, an endoprotease complex that catalyzes the intramembrane cleavage of integral membrane proteins such as Notch receptors and APP (amyloid-beta precursor protein). It probably represents a stabilizing cofactor required for the assembly of the gamma-secretase complex (By similarity).</text>
</comment>
<comment type="subunit">
    <text evidence="1">Homodimer. Component of the gamma-secretase complex, a complex composed of a presenilin homodimer, nicastrin, aph1 and pen2 (By similarity).</text>
</comment>
<comment type="subcellular location">
    <subcellularLocation>
        <location evidence="3">Membrane</location>
        <topology evidence="3">Single-pass type I membrane protein</topology>
    </subcellularLocation>
</comment>
<comment type="similarity">
    <text evidence="3">Belongs to the nicastrin family.</text>
</comment>
<evidence type="ECO:0000250" key="1"/>
<evidence type="ECO:0000255" key="2"/>
<evidence type="ECO:0000305" key="3"/>
<sequence>MKIKNYFIIVFIIIVLSTDVISSQSSIEDKMYTSLNSYPCTRIMTLNGQIGCSSSHGGDSGILYLIDSDESYHNYFSYNQQKDIIVVFDSNYFNKTLVLEMYSKKKMNGALVLTDIGKTYPYSPEDQYPIKQFGLYPDSNLNWNPNGDGFTYMNFPFPMFALELKTSIIIRNLSTINRDGKYPAYGAELDSFMQGAINAETCLRRGFCEPVGGQSIWSSFSEVIDQSKPIILVMLPIDATAFFRDLATGTDQSGYALTVLLSMLNTLQGVDKTKWDKEVIFAMWNSERWGYVGSTNFVNDLLNFNCTSLDSNNQNSCSSPPMLDLTFEQIKFENIYAIIEFNQIGRPVNSGKKTPNKLDIYNLVFHPNGGAGANQLMDVFSQSTQSYENSTIQFQKTTQNELPPCSSMSFIKEINKKSAPNFIGTLVITDHDYQYNNPYFGDEQDNSGNINTTTSTLFDMVQVFSKSIDLLAGGNGTVKVDDLFIREINVCLTQSITCNWVTKLMSTFPYNPIPNFYSGVYGVSPVNHITPIETRFIFRMATYLTQHRTNATNCTSDNDCDTSSSICVNKVCLYSNTHYHNAISLAFSFDNSKSSWTIVNTSYPVFVESNWDYTTVRLFQVGSYANEIWFLVSGLIELLLSVGIIFYIKKYLSKRYKLL</sequence>
<feature type="signal peptide" evidence="2">
    <location>
        <begin position="1"/>
        <end position="22"/>
    </location>
</feature>
<feature type="chain" id="PRO_0000331269" description="Nicastrin">
    <location>
        <begin position="23"/>
        <end position="659"/>
    </location>
</feature>
<feature type="topological domain" description="Extracellular" evidence="2">
    <location>
        <begin position="23"/>
        <end position="627"/>
    </location>
</feature>
<feature type="transmembrane region" description="Helical" evidence="2">
    <location>
        <begin position="628"/>
        <end position="648"/>
    </location>
</feature>
<feature type="topological domain" description="Cytoplasmic" evidence="2">
    <location>
        <begin position="649"/>
        <end position="659"/>
    </location>
</feature>
<feature type="glycosylation site" description="N-linked (GlcNAc...) asparagine" evidence="2">
    <location>
        <position position="94"/>
    </location>
</feature>
<feature type="glycosylation site" description="N-linked (GlcNAc...) asparagine" evidence="2">
    <location>
        <position position="172"/>
    </location>
</feature>
<feature type="glycosylation site" description="N-linked (GlcNAc...) asparagine" evidence="2">
    <location>
        <position position="305"/>
    </location>
</feature>
<feature type="glycosylation site" description="N-linked (GlcNAc...) asparagine" evidence="2">
    <location>
        <position position="389"/>
    </location>
</feature>
<feature type="glycosylation site" description="N-linked (GlcNAc...) asparagine" evidence="2">
    <location>
        <position position="451"/>
    </location>
</feature>
<feature type="glycosylation site" description="N-linked (GlcNAc...) asparagine" evidence="2">
    <location>
        <position position="475"/>
    </location>
</feature>
<feature type="glycosylation site" description="N-linked (GlcNAc...) asparagine" evidence="2">
    <location>
        <position position="550"/>
    </location>
</feature>
<feature type="glycosylation site" description="N-linked (GlcNAc...) asparagine" evidence="2">
    <location>
        <position position="553"/>
    </location>
</feature>
<feature type="glycosylation site" description="N-linked (GlcNAc...) asparagine" evidence="2">
    <location>
        <position position="600"/>
    </location>
</feature>
<name>NICA_DICDI</name>
<organism>
    <name type="scientific">Dictyostelium discoideum</name>
    <name type="common">Social amoeba</name>
    <dbReference type="NCBI Taxonomy" id="44689"/>
    <lineage>
        <taxon>Eukaryota</taxon>
        <taxon>Amoebozoa</taxon>
        <taxon>Evosea</taxon>
        <taxon>Eumycetozoa</taxon>
        <taxon>Dictyostelia</taxon>
        <taxon>Dictyosteliales</taxon>
        <taxon>Dictyosteliaceae</taxon>
        <taxon>Dictyostelium</taxon>
    </lineage>
</organism>
<gene>
    <name type="primary">ncstn</name>
    <name type="ORF">DDB_G0287801</name>
</gene>
<reference key="1">
    <citation type="journal article" date="2005" name="Nature">
        <title>The genome of the social amoeba Dictyostelium discoideum.</title>
        <authorList>
            <person name="Eichinger L."/>
            <person name="Pachebat J.A."/>
            <person name="Gloeckner G."/>
            <person name="Rajandream M.A."/>
            <person name="Sucgang R."/>
            <person name="Berriman M."/>
            <person name="Song J."/>
            <person name="Olsen R."/>
            <person name="Szafranski K."/>
            <person name="Xu Q."/>
            <person name="Tunggal B."/>
            <person name="Kummerfeld S."/>
            <person name="Madera M."/>
            <person name="Konfortov B.A."/>
            <person name="Rivero F."/>
            <person name="Bankier A.T."/>
            <person name="Lehmann R."/>
            <person name="Hamlin N."/>
            <person name="Davies R."/>
            <person name="Gaudet P."/>
            <person name="Fey P."/>
            <person name="Pilcher K."/>
            <person name="Chen G."/>
            <person name="Saunders D."/>
            <person name="Sodergren E.J."/>
            <person name="Davis P."/>
            <person name="Kerhornou A."/>
            <person name="Nie X."/>
            <person name="Hall N."/>
            <person name="Anjard C."/>
            <person name="Hemphill L."/>
            <person name="Bason N."/>
            <person name="Farbrother P."/>
            <person name="Desany B."/>
            <person name="Just E."/>
            <person name="Morio T."/>
            <person name="Rost R."/>
            <person name="Churcher C.M."/>
            <person name="Cooper J."/>
            <person name="Haydock S."/>
            <person name="van Driessche N."/>
            <person name="Cronin A."/>
            <person name="Goodhead I."/>
            <person name="Muzny D.M."/>
            <person name="Mourier T."/>
            <person name="Pain A."/>
            <person name="Lu M."/>
            <person name="Harper D."/>
            <person name="Lindsay R."/>
            <person name="Hauser H."/>
            <person name="James K.D."/>
            <person name="Quiles M."/>
            <person name="Madan Babu M."/>
            <person name="Saito T."/>
            <person name="Buchrieser C."/>
            <person name="Wardroper A."/>
            <person name="Felder M."/>
            <person name="Thangavelu M."/>
            <person name="Johnson D."/>
            <person name="Knights A."/>
            <person name="Loulseged H."/>
            <person name="Mungall K.L."/>
            <person name="Oliver K."/>
            <person name="Price C."/>
            <person name="Quail M.A."/>
            <person name="Urushihara H."/>
            <person name="Hernandez J."/>
            <person name="Rabbinowitsch E."/>
            <person name="Steffen D."/>
            <person name="Sanders M."/>
            <person name="Ma J."/>
            <person name="Kohara Y."/>
            <person name="Sharp S."/>
            <person name="Simmonds M.N."/>
            <person name="Spiegler S."/>
            <person name="Tivey A."/>
            <person name="Sugano S."/>
            <person name="White B."/>
            <person name="Walker D."/>
            <person name="Woodward J.R."/>
            <person name="Winckler T."/>
            <person name="Tanaka Y."/>
            <person name="Shaulsky G."/>
            <person name="Schleicher M."/>
            <person name="Weinstock G.M."/>
            <person name="Rosenthal A."/>
            <person name="Cox E.C."/>
            <person name="Chisholm R.L."/>
            <person name="Gibbs R.A."/>
            <person name="Loomis W.F."/>
            <person name="Platzer M."/>
            <person name="Kay R.R."/>
            <person name="Williams J.G."/>
            <person name="Dear P.H."/>
            <person name="Noegel A.A."/>
            <person name="Barrell B.G."/>
            <person name="Kuspa A."/>
        </authorList>
    </citation>
    <scope>NUCLEOTIDE SEQUENCE [LARGE SCALE GENOMIC DNA]</scope>
    <source>
        <strain>AX4</strain>
    </source>
</reference>
<keyword id="KW-0325">Glycoprotein</keyword>
<keyword id="KW-0472">Membrane</keyword>
<keyword id="KW-0914">Notch signaling pathway</keyword>
<keyword id="KW-1185">Reference proteome</keyword>
<keyword id="KW-0732">Signal</keyword>
<keyword id="KW-0812">Transmembrane</keyword>
<keyword id="KW-1133">Transmembrane helix</keyword>
<dbReference type="EMBL" id="AAFI02000104">
    <property type="protein sequence ID" value="EAL63547.2"/>
    <property type="molecule type" value="Genomic_DNA"/>
</dbReference>
<dbReference type="RefSeq" id="XP_637065.2">
    <property type="nucleotide sequence ID" value="XM_631973.2"/>
</dbReference>
<dbReference type="SMR" id="Q54JT7"/>
<dbReference type="FunCoup" id="Q54JT7">
    <property type="interactions" value="392"/>
</dbReference>
<dbReference type="STRING" id="44689.Q54JT7"/>
<dbReference type="GlyCosmos" id="Q54JT7">
    <property type="glycosylation" value="9 sites, No reported glycans"/>
</dbReference>
<dbReference type="GlyGen" id="Q54JT7">
    <property type="glycosylation" value="9 sites"/>
</dbReference>
<dbReference type="PaxDb" id="44689-DDB0237950"/>
<dbReference type="EnsemblProtists" id="EAL63547">
    <property type="protein sequence ID" value="EAL63547"/>
    <property type="gene ID" value="DDB_G0287801"/>
</dbReference>
<dbReference type="GeneID" id="8626320"/>
<dbReference type="KEGG" id="ddi:DDB_G0287801"/>
<dbReference type="dictyBase" id="DDB_G0287801">
    <property type="gene designation" value="ncstn"/>
</dbReference>
<dbReference type="VEuPathDB" id="AmoebaDB:DDB_G0287801"/>
<dbReference type="eggNOG" id="KOG2657">
    <property type="taxonomic scope" value="Eukaryota"/>
</dbReference>
<dbReference type="HOGENOM" id="CLU_029323_0_0_1"/>
<dbReference type="InParanoid" id="Q54JT7"/>
<dbReference type="OMA" id="ECVYPGV"/>
<dbReference type="PhylomeDB" id="Q54JT7"/>
<dbReference type="Reactome" id="R-DDI-6798695">
    <property type="pathway name" value="Neutrophil degranulation"/>
</dbReference>
<dbReference type="PRO" id="PR:Q54JT7"/>
<dbReference type="Proteomes" id="UP000002195">
    <property type="component" value="Chromosome 5"/>
</dbReference>
<dbReference type="GO" id="GO:0005783">
    <property type="term" value="C:endoplasmic reticulum"/>
    <property type="evidence" value="ECO:0000314"/>
    <property type="project" value="dictyBase"/>
</dbReference>
<dbReference type="GO" id="GO:0070765">
    <property type="term" value="C:gamma-secretase complex"/>
    <property type="evidence" value="ECO:0000315"/>
    <property type="project" value="dictyBase"/>
</dbReference>
<dbReference type="GO" id="GO:0005886">
    <property type="term" value="C:plasma membrane"/>
    <property type="evidence" value="ECO:0000318"/>
    <property type="project" value="GO_Central"/>
</dbReference>
<dbReference type="GO" id="GO:0006914">
    <property type="term" value="P:autophagy"/>
    <property type="evidence" value="ECO:0000315"/>
    <property type="project" value="dictyBase"/>
</dbReference>
<dbReference type="GO" id="GO:0044351">
    <property type="term" value="P:macropinocytosis"/>
    <property type="evidence" value="ECO:0000315"/>
    <property type="project" value="dictyBase"/>
</dbReference>
<dbReference type="GO" id="GO:0006509">
    <property type="term" value="P:membrane protein ectodomain proteolysis"/>
    <property type="evidence" value="ECO:0000250"/>
    <property type="project" value="dictyBase"/>
</dbReference>
<dbReference type="GO" id="GO:0007219">
    <property type="term" value="P:Notch signaling pathway"/>
    <property type="evidence" value="ECO:0007669"/>
    <property type="project" value="UniProtKB-KW"/>
</dbReference>
<dbReference type="GO" id="GO:0006909">
    <property type="term" value="P:phagocytosis"/>
    <property type="evidence" value="ECO:0000315"/>
    <property type="project" value="dictyBase"/>
</dbReference>
<dbReference type="GO" id="GO:0016485">
    <property type="term" value="P:protein processing"/>
    <property type="evidence" value="ECO:0000315"/>
    <property type="project" value="dictyBase"/>
</dbReference>
<dbReference type="GO" id="GO:0044671">
    <property type="term" value="P:sorocarp spore cell differentiation"/>
    <property type="evidence" value="ECO:0000315"/>
    <property type="project" value="dictyBase"/>
</dbReference>
<dbReference type="CDD" id="cd03881">
    <property type="entry name" value="M28_Nicastrin"/>
    <property type="match status" value="1"/>
</dbReference>
<dbReference type="FunFam" id="3.40.630.10:FF:000185">
    <property type="entry name" value="Nicastrin"/>
    <property type="match status" value="1"/>
</dbReference>
<dbReference type="Gene3D" id="3.40.630.10">
    <property type="entry name" value="Zn peptidases"/>
    <property type="match status" value="1"/>
</dbReference>
<dbReference type="InterPro" id="IPR041084">
    <property type="entry name" value="Ncstrn_small"/>
</dbReference>
<dbReference type="InterPro" id="IPR008710">
    <property type="entry name" value="Nicastrin"/>
</dbReference>
<dbReference type="PANTHER" id="PTHR21092">
    <property type="entry name" value="NICASTRIN"/>
    <property type="match status" value="1"/>
</dbReference>
<dbReference type="PANTHER" id="PTHR21092:SF0">
    <property type="entry name" value="NICASTRIN"/>
    <property type="match status" value="1"/>
</dbReference>
<dbReference type="Pfam" id="PF18266">
    <property type="entry name" value="Ncstrn_small"/>
    <property type="match status" value="1"/>
</dbReference>
<dbReference type="Pfam" id="PF05450">
    <property type="entry name" value="Nicastrin"/>
    <property type="match status" value="1"/>
</dbReference>
<dbReference type="SUPFAM" id="SSF53187">
    <property type="entry name" value="Zn-dependent exopeptidases"/>
    <property type="match status" value="1"/>
</dbReference>
<accession>Q54JT7</accession>